<feature type="chain" id="PRO_0000195551" description="ATP synthase F(0) complex subunit 8">
    <location>
        <begin position="1"/>
        <end position="67"/>
    </location>
</feature>
<feature type="transmembrane region" description="Helical" evidence="3">
    <location>
        <begin position="8"/>
        <end position="24"/>
    </location>
</feature>
<feature type="modified residue" description="N6-acetyllysine; alternate" evidence="6">
    <location>
        <position position="54"/>
    </location>
</feature>
<feature type="modified residue" description="N6-succinyllysine; alternate" evidence="7">
    <location>
        <position position="54"/>
    </location>
</feature>
<feature type="modified residue" description="N6-acetyllysine" evidence="6">
    <location>
        <position position="57"/>
    </location>
</feature>
<reference key="1">
    <citation type="journal article" date="1981" name="Cell">
        <title>Sequence and gene organization of mouse mitochondrial DNA.</title>
        <authorList>
            <person name="Bibb M.J."/>
            <person name="van Etten R.A."/>
            <person name="Wright C.T."/>
            <person name="Walberg M.W."/>
            <person name="Clayton D.A."/>
        </authorList>
    </citation>
    <scope>NUCLEOTIDE SEQUENCE [GENOMIC DNA]</scope>
</reference>
<reference key="2">
    <citation type="journal article" date="2003" name="Nucleic Acids Res.">
        <title>Revisiting the mouse mitochondrial DNA sequence.</title>
        <authorList>
            <person name="Bayona-Bafaluy M.P."/>
            <person name="Acin-Perez R."/>
            <person name="Mullikin J.C."/>
            <person name="Park J.S."/>
            <person name="Moreno-Loshuertos R."/>
            <person name="Hu P."/>
            <person name="Perez-Martos A."/>
            <person name="Fernandez-Silva P."/>
            <person name="Bai Y."/>
            <person name="Enriquez J.A."/>
        </authorList>
    </citation>
    <scope>NUCLEOTIDE SEQUENCE [LARGE SCALE GENOMIC DNA]</scope>
    <source>
        <strain>C57BL/6J</strain>
    </source>
</reference>
<reference key="3">
    <citation type="submission" date="2007-04" db="UniProtKB">
        <authorList>
            <person name="Lubec G."/>
            <person name="Kang S.U."/>
        </authorList>
    </citation>
    <scope>PROTEIN SEQUENCE OF 58-67</scope>
    <scope>IDENTIFICATION BY MASS SPECTROMETRY</scope>
    <source>
        <strain>C57BL/6J</strain>
        <tissue>Brain</tissue>
    </source>
</reference>
<reference key="4">
    <citation type="journal article" date="2010" name="Cell">
        <title>A tissue-specific atlas of mouse protein phosphorylation and expression.</title>
        <authorList>
            <person name="Huttlin E.L."/>
            <person name="Jedrychowski M.P."/>
            <person name="Elias J.E."/>
            <person name="Goswami T."/>
            <person name="Rad R."/>
            <person name="Beausoleil S.A."/>
            <person name="Villen J."/>
            <person name="Haas W."/>
            <person name="Sowa M.E."/>
            <person name="Gygi S.P."/>
        </authorList>
    </citation>
    <scope>IDENTIFICATION BY MASS SPECTROMETRY [LARGE SCALE ANALYSIS]</scope>
    <source>
        <tissue>Brain</tissue>
        <tissue>Brown adipose tissue</tissue>
        <tissue>Heart</tissue>
        <tissue>Kidney</tissue>
        <tissue>Liver</tissue>
        <tissue>Lung</tissue>
        <tissue>Pancreas</tissue>
        <tissue>Spleen</tissue>
        <tissue>Testis</tissue>
    </source>
</reference>
<reference key="5">
    <citation type="journal article" date="2013" name="Mol. Cell">
        <title>SIRT5-mediated lysine desuccinylation impacts diverse metabolic pathways.</title>
        <authorList>
            <person name="Park J."/>
            <person name="Chen Y."/>
            <person name="Tishkoff D.X."/>
            <person name="Peng C."/>
            <person name="Tan M."/>
            <person name="Dai L."/>
            <person name="Xie Z."/>
            <person name="Zhang Y."/>
            <person name="Zwaans B.M."/>
            <person name="Skinner M.E."/>
            <person name="Lombard D.B."/>
            <person name="Zhao Y."/>
        </authorList>
    </citation>
    <scope>SUCCINYLATION [LARGE SCALE ANALYSIS] AT LYS-54</scope>
    <scope>IDENTIFICATION BY MASS SPECTROMETRY [LARGE SCALE ANALYSIS]</scope>
    <source>
        <tissue>Liver</tissue>
    </source>
</reference>
<reference key="6">
    <citation type="journal article" date="2013" name="Proc. Natl. Acad. Sci. U.S.A.">
        <title>Label-free quantitative proteomics of the lysine acetylome in mitochondria identifies substrates of SIRT3 in metabolic pathways.</title>
        <authorList>
            <person name="Rardin M.J."/>
            <person name="Newman J.C."/>
            <person name="Held J.M."/>
            <person name="Cusack M.P."/>
            <person name="Sorensen D.J."/>
            <person name="Li B."/>
            <person name="Schilling B."/>
            <person name="Mooney S.D."/>
            <person name="Kahn C.R."/>
            <person name="Verdin E."/>
            <person name="Gibson B.W."/>
        </authorList>
    </citation>
    <scope>ACETYLATION [LARGE SCALE ANALYSIS] AT LYS-54 AND LYS-57</scope>
    <scope>IDENTIFICATION BY MASS SPECTROMETRY [LARGE SCALE ANALYSIS]</scope>
    <source>
        <tissue>Liver</tissue>
    </source>
</reference>
<gene>
    <name evidence="5" type="primary">Mtatp8</name>
    <name type="synonym">Atp8</name>
    <name type="synonym">mt-Atp8</name>
</gene>
<organism>
    <name type="scientific">Mus musculus</name>
    <name type="common">Mouse</name>
    <dbReference type="NCBI Taxonomy" id="10090"/>
    <lineage>
        <taxon>Eukaryota</taxon>
        <taxon>Metazoa</taxon>
        <taxon>Chordata</taxon>
        <taxon>Craniata</taxon>
        <taxon>Vertebrata</taxon>
        <taxon>Euteleostomi</taxon>
        <taxon>Mammalia</taxon>
        <taxon>Eutheria</taxon>
        <taxon>Euarchontoglires</taxon>
        <taxon>Glires</taxon>
        <taxon>Rodentia</taxon>
        <taxon>Myomorpha</taxon>
        <taxon>Muroidea</taxon>
        <taxon>Muridae</taxon>
        <taxon>Murinae</taxon>
        <taxon>Mus</taxon>
        <taxon>Mus</taxon>
    </lineage>
</organism>
<protein>
    <recommendedName>
        <fullName evidence="4">ATP synthase F(0) complex subunit 8</fullName>
    </recommendedName>
    <alternativeName>
        <fullName>A6L</fullName>
    </alternativeName>
    <alternativeName>
        <fullName>F-ATPase subunit 8</fullName>
    </alternativeName>
</protein>
<geneLocation type="mitochondrion"/>
<dbReference type="EMBL" id="J01420">
    <property type="protein sequence ID" value="AAB48648.1"/>
    <property type="molecule type" value="Genomic_DNA"/>
</dbReference>
<dbReference type="EMBL" id="V00711">
    <property type="protein sequence ID" value="CAA24084.1"/>
    <property type="molecule type" value="Genomic_DNA"/>
</dbReference>
<dbReference type="EMBL" id="AY172335">
    <property type="protein sequence ID" value="AAN85126.1"/>
    <property type="molecule type" value="Genomic_DNA"/>
</dbReference>
<dbReference type="PIR" id="A01064">
    <property type="entry name" value="PWMS8"/>
</dbReference>
<dbReference type="RefSeq" id="NP_904332.1">
    <property type="nucleotide sequence ID" value="NC_005089.1"/>
</dbReference>
<dbReference type="SMR" id="P03930"/>
<dbReference type="BioGRID" id="201540">
    <property type="interactions" value="23"/>
</dbReference>
<dbReference type="FunCoup" id="P03930">
    <property type="interactions" value="168"/>
</dbReference>
<dbReference type="STRING" id="10090.ENSMUSP00000080995"/>
<dbReference type="GlyGen" id="P03930">
    <property type="glycosylation" value="1 site, 1 O-linked glycan (1 site)"/>
</dbReference>
<dbReference type="iPTMnet" id="P03930"/>
<dbReference type="PhosphoSitePlus" id="P03930"/>
<dbReference type="jPOST" id="P03930"/>
<dbReference type="PaxDb" id="10090-ENSMUSP00000080995"/>
<dbReference type="PeptideAtlas" id="P03930"/>
<dbReference type="ProteomicsDB" id="277132"/>
<dbReference type="Pumba" id="P03930"/>
<dbReference type="Antibodypedia" id="64403">
    <property type="antibodies" value="42 antibodies from 14 providers"/>
</dbReference>
<dbReference type="Ensembl" id="ENSMUST00000082407.1">
    <property type="protein sequence ID" value="ENSMUSP00000080995.1"/>
    <property type="gene ID" value="ENSMUSG00000064356.1"/>
</dbReference>
<dbReference type="GeneID" id="17706"/>
<dbReference type="KEGG" id="mmu:17706"/>
<dbReference type="AGR" id="MGI:99926"/>
<dbReference type="CTD" id="4509"/>
<dbReference type="MGI" id="MGI:99926">
    <property type="gene designation" value="mt-Atp8"/>
</dbReference>
<dbReference type="VEuPathDB" id="HostDB:ENSMUSG00000064356"/>
<dbReference type="eggNOG" id="ENOG502T21P">
    <property type="taxonomic scope" value="Eukaryota"/>
</dbReference>
<dbReference type="GeneTree" id="ENSGT00390000008771"/>
<dbReference type="HOGENOM" id="CLU_2811757_0_0_1"/>
<dbReference type="InParanoid" id="P03930"/>
<dbReference type="OMA" id="LDTSTWF"/>
<dbReference type="OrthoDB" id="9835073at2759"/>
<dbReference type="PhylomeDB" id="P03930"/>
<dbReference type="TreeFam" id="TF343854"/>
<dbReference type="Reactome" id="R-MMU-163210">
    <property type="pathway name" value="Formation of ATP by chemiosmotic coupling"/>
</dbReference>
<dbReference type="Reactome" id="R-MMU-8949613">
    <property type="pathway name" value="Cristae formation"/>
</dbReference>
<dbReference type="ChiTaRS" id="mt-Atp8">
    <property type="organism name" value="mouse"/>
</dbReference>
<dbReference type="PRO" id="PR:P03930"/>
<dbReference type="Proteomes" id="UP000000589">
    <property type="component" value="Mitochondrion MT"/>
</dbReference>
<dbReference type="RNAct" id="P03930">
    <property type="molecule type" value="protein"/>
</dbReference>
<dbReference type="Bgee" id="ENSMUSG00000064356">
    <property type="expression patterns" value="Expressed in striatum and 65 other cell types or tissues"/>
</dbReference>
<dbReference type="ExpressionAtlas" id="P03930">
    <property type="expression patterns" value="baseline and differential"/>
</dbReference>
<dbReference type="GO" id="GO:0031966">
    <property type="term" value="C:mitochondrial membrane"/>
    <property type="evidence" value="ECO:0007669"/>
    <property type="project" value="UniProtKB-SubCell"/>
</dbReference>
<dbReference type="GO" id="GO:0005739">
    <property type="term" value="C:mitochondrion"/>
    <property type="evidence" value="ECO:0007005"/>
    <property type="project" value="MGI"/>
</dbReference>
<dbReference type="GO" id="GO:0045259">
    <property type="term" value="C:proton-transporting ATP synthase complex"/>
    <property type="evidence" value="ECO:0000250"/>
    <property type="project" value="UniProtKB"/>
</dbReference>
<dbReference type="GO" id="GO:0015078">
    <property type="term" value="F:proton transmembrane transporter activity"/>
    <property type="evidence" value="ECO:0007669"/>
    <property type="project" value="InterPro"/>
</dbReference>
<dbReference type="GO" id="GO:0015986">
    <property type="term" value="P:proton motive force-driven ATP synthesis"/>
    <property type="evidence" value="ECO:0007669"/>
    <property type="project" value="InterPro"/>
</dbReference>
<dbReference type="InterPro" id="IPR039017">
    <property type="entry name" value="ATP8_mammal"/>
</dbReference>
<dbReference type="InterPro" id="IPR001421">
    <property type="entry name" value="ATP8_metazoa"/>
</dbReference>
<dbReference type="PANTHER" id="PTHR13722">
    <property type="entry name" value="ATP SYNTHASE PROTEIN 8"/>
    <property type="match status" value="1"/>
</dbReference>
<dbReference type="PANTHER" id="PTHR13722:SF0">
    <property type="entry name" value="ATP SYNTHASE PROTEIN 8"/>
    <property type="match status" value="1"/>
</dbReference>
<dbReference type="Pfam" id="PF00895">
    <property type="entry name" value="ATP-synt_8"/>
    <property type="match status" value="1"/>
</dbReference>
<evidence type="ECO:0000250" key="1">
    <source>
        <dbReference type="UniProtKB" id="P03928"/>
    </source>
</evidence>
<evidence type="ECO:0000250" key="2">
    <source>
        <dbReference type="UniProtKB" id="P19483"/>
    </source>
</evidence>
<evidence type="ECO:0000255" key="3"/>
<evidence type="ECO:0000305" key="4"/>
<evidence type="ECO:0000312" key="5">
    <source>
        <dbReference type="MGI" id="MGI:99926"/>
    </source>
</evidence>
<evidence type="ECO:0007744" key="6">
    <source>
    </source>
</evidence>
<evidence type="ECO:0007744" key="7">
    <source>
    </source>
</evidence>
<sequence>MPQLDTSTWFITIISSMITLFILFQLKVSSQTFPLAPSPKSLTTMKVKTPWELKWTKIYLPHSLPQQ</sequence>
<accession>P03930</accession>
<proteinExistence type="evidence at protein level"/>
<name>ATP8_MOUSE</name>
<keyword id="KW-0007">Acetylation</keyword>
<keyword id="KW-0066">ATP synthesis</keyword>
<keyword id="KW-0138">CF(0)</keyword>
<keyword id="KW-0903">Direct protein sequencing</keyword>
<keyword id="KW-0375">Hydrogen ion transport</keyword>
<keyword id="KW-0406">Ion transport</keyword>
<keyword id="KW-0472">Membrane</keyword>
<keyword id="KW-0496">Mitochondrion</keyword>
<keyword id="KW-1185">Reference proteome</keyword>
<keyword id="KW-0812">Transmembrane</keyword>
<keyword id="KW-1133">Transmembrane helix</keyword>
<keyword id="KW-0813">Transport</keyword>
<comment type="function">
    <text evidence="1 2">Subunit 8, of the mitochondrial membrane ATP synthase complex (F(1)F(0) ATP synthase or Complex V) that produces ATP from ADP in the presence of a proton gradient across the membrane which is generated by electron transport complexes of the respiratory chain. ATP synthase complex consist of a soluble F(1) head domain - the catalytic core - and a membrane F(1) domain - the membrane proton channel. These two domains are linked by a central stalk rotating inside the F(1) region and a stationary peripheral stalk. During catalysis, ATP synthesis in the catalytic domain of F(1) is coupled via a rotary mechanism of the central stalk subunits to proton translocation (By similarity). In vivo, can only synthesize ATP although its ATP hydrolase activity can be activated artificially in vitro (By similarity). Part of the complex F(0) domain (By similarity).</text>
</comment>
<comment type="subunit">
    <text evidence="1">Component of the ATP synthase complex composed at least of ATP5F1A/subunit alpha, ATP5F1B/subunit beta, ATP5MC1/subunit c (homooctomer), MT-ATP6/subunit a, MT-ATP8/subunit 8, ATP5ME/subunit e, ATP5MF/subunit f, ATP5MG/subunit g, ATP5MK/subunit k, ATP5MJ/subunit j, ATP5F1C/subunit gamma, ATP5F1D/subunit delta, ATP5F1E/subunit epsilon, ATP5PF/subunit F6, ATP5PB/subunit b, ATP5PD/subunit d, ATP5PO/subunit OSCP. ATP synthase complex consists of a soluble F(1) head domain (subunits alpha(3) and beta(3)) - the catalytic core - and a membrane F(0) domain - the membrane proton channel (subunits c, a, 8, e, f, g, k and j). These two domains are linked by a central stalk (subunits gamma, delta, and epsilon) rotating inside the F1 region and a stationary peripheral stalk (subunits F6, b, d, and OSCP). Interacts with PRICKLE3.</text>
</comment>
<comment type="subcellular location">
    <subcellularLocation>
        <location>Mitochondrion membrane</location>
        <topology>Single-pass membrane protein</topology>
    </subcellularLocation>
</comment>
<comment type="similarity">
    <text evidence="4">Belongs to the ATPase protein 8 family.</text>
</comment>